<accession>Q9PQT9</accession>
<gene>
    <name evidence="1" type="primary">rpsO</name>
    <name evidence="1" type="synonym">rps15</name>
    <name type="ordered locus">UU204</name>
</gene>
<evidence type="ECO:0000255" key="1">
    <source>
        <dbReference type="HAMAP-Rule" id="MF_01343"/>
    </source>
</evidence>
<evidence type="ECO:0000305" key="2"/>
<keyword id="KW-1185">Reference proteome</keyword>
<keyword id="KW-0687">Ribonucleoprotein</keyword>
<keyword id="KW-0689">Ribosomal protein</keyword>
<keyword id="KW-0694">RNA-binding</keyword>
<keyword id="KW-0699">rRNA-binding</keyword>
<feature type="chain" id="PRO_0000115580" description="Small ribosomal subunit protein uS15">
    <location>
        <begin position="1"/>
        <end position="89"/>
    </location>
</feature>
<dbReference type="EMBL" id="AF222894">
    <property type="protein sequence ID" value="AAF30611.1"/>
    <property type="molecule type" value="Genomic_DNA"/>
</dbReference>
<dbReference type="RefSeq" id="WP_004025791.1">
    <property type="nucleotide sequence ID" value="NC_002162.1"/>
</dbReference>
<dbReference type="SMR" id="Q9PQT9"/>
<dbReference type="STRING" id="273119.UU204"/>
<dbReference type="EnsemblBacteria" id="AAF30611">
    <property type="protein sequence ID" value="AAF30611"/>
    <property type="gene ID" value="UU204"/>
</dbReference>
<dbReference type="GeneID" id="93848676"/>
<dbReference type="KEGG" id="uur:UU204"/>
<dbReference type="eggNOG" id="COG0184">
    <property type="taxonomic scope" value="Bacteria"/>
</dbReference>
<dbReference type="HOGENOM" id="CLU_148518_1_0_14"/>
<dbReference type="OrthoDB" id="9799262at2"/>
<dbReference type="Proteomes" id="UP000000423">
    <property type="component" value="Chromosome"/>
</dbReference>
<dbReference type="GO" id="GO:0022627">
    <property type="term" value="C:cytosolic small ribosomal subunit"/>
    <property type="evidence" value="ECO:0007669"/>
    <property type="project" value="TreeGrafter"/>
</dbReference>
<dbReference type="GO" id="GO:0019843">
    <property type="term" value="F:rRNA binding"/>
    <property type="evidence" value="ECO:0007669"/>
    <property type="project" value="UniProtKB-UniRule"/>
</dbReference>
<dbReference type="GO" id="GO:0003735">
    <property type="term" value="F:structural constituent of ribosome"/>
    <property type="evidence" value="ECO:0007669"/>
    <property type="project" value="InterPro"/>
</dbReference>
<dbReference type="GO" id="GO:0006412">
    <property type="term" value="P:translation"/>
    <property type="evidence" value="ECO:0007669"/>
    <property type="project" value="UniProtKB-UniRule"/>
</dbReference>
<dbReference type="CDD" id="cd00353">
    <property type="entry name" value="Ribosomal_S15p_S13e"/>
    <property type="match status" value="1"/>
</dbReference>
<dbReference type="Gene3D" id="6.10.250.3130">
    <property type="match status" value="1"/>
</dbReference>
<dbReference type="Gene3D" id="1.10.287.10">
    <property type="entry name" value="S15/NS1, RNA-binding"/>
    <property type="match status" value="1"/>
</dbReference>
<dbReference type="HAMAP" id="MF_01343_B">
    <property type="entry name" value="Ribosomal_uS15_B"/>
    <property type="match status" value="1"/>
</dbReference>
<dbReference type="InterPro" id="IPR000589">
    <property type="entry name" value="Ribosomal_uS15"/>
</dbReference>
<dbReference type="InterPro" id="IPR005290">
    <property type="entry name" value="Ribosomal_uS15_bac-type"/>
</dbReference>
<dbReference type="InterPro" id="IPR009068">
    <property type="entry name" value="uS15_NS1_RNA-bd_sf"/>
</dbReference>
<dbReference type="NCBIfam" id="TIGR00952">
    <property type="entry name" value="S15_bact"/>
    <property type="match status" value="1"/>
</dbReference>
<dbReference type="PANTHER" id="PTHR23321">
    <property type="entry name" value="RIBOSOMAL PROTEIN S15, BACTERIAL AND ORGANELLAR"/>
    <property type="match status" value="1"/>
</dbReference>
<dbReference type="PANTHER" id="PTHR23321:SF26">
    <property type="entry name" value="SMALL RIBOSOMAL SUBUNIT PROTEIN US15M"/>
    <property type="match status" value="1"/>
</dbReference>
<dbReference type="Pfam" id="PF00312">
    <property type="entry name" value="Ribosomal_S15"/>
    <property type="match status" value="1"/>
</dbReference>
<dbReference type="SMART" id="SM01387">
    <property type="entry name" value="Ribosomal_S15"/>
    <property type="match status" value="1"/>
</dbReference>
<dbReference type="SUPFAM" id="SSF47060">
    <property type="entry name" value="S15/NS1 RNA-binding domain"/>
    <property type="match status" value="1"/>
</dbReference>
<dbReference type="PROSITE" id="PS00362">
    <property type="entry name" value="RIBOSOMAL_S15"/>
    <property type="match status" value="1"/>
</dbReference>
<comment type="function">
    <text evidence="1">One of the primary rRNA binding proteins, it binds directly to 16S rRNA where it helps nucleate assembly of the platform of the 30S subunit by binding and bridging several RNA helices of the 16S rRNA.</text>
</comment>
<comment type="function">
    <text evidence="1">Forms an intersubunit bridge (bridge B4) with the 23S rRNA of the 50S subunit in the ribosome.</text>
</comment>
<comment type="subunit">
    <text evidence="1">Part of the 30S ribosomal subunit. Forms a bridge to the 50S subunit in the 70S ribosome, contacting the 23S rRNA.</text>
</comment>
<comment type="similarity">
    <text evidence="1">Belongs to the universal ribosomal protein uS15 family.</text>
</comment>
<organism>
    <name type="scientific">Ureaplasma parvum serovar 3 (strain ATCC 700970)</name>
    <dbReference type="NCBI Taxonomy" id="273119"/>
    <lineage>
        <taxon>Bacteria</taxon>
        <taxon>Bacillati</taxon>
        <taxon>Mycoplasmatota</taxon>
        <taxon>Mycoplasmoidales</taxon>
        <taxon>Mycoplasmoidaceae</taxon>
        <taxon>Ureaplasma</taxon>
    </lineage>
</organism>
<proteinExistence type="inferred from homology"/>
<protein>
    <recommendedName>
        <fullName evidence="1">Small ribosomal subunit protein uS15</fullName>
    </recommendedName>
    <alternativeName>
        <fullName evidence="2">30S ribosomal protein S15</fullName>
    </alternativeName>
</protein>
<reference key="1">
    <citation type="journal article" date="2000" name="Nature">
        <title>The complete sequence of the mucosal pathogen Ureaplasma urealyticum.</title>
        <authorList>
            <person name="Glass J.I."/>
            <person name="Lefkowitz E.J."/>
            <person name="Glass J.S."/>
            <person name="Heiner C.R."/>
            <person name="Chen E.Y."/>
            <person name="Cassell G.H."/>
        </authorList>
    </citation>
    <scope>NUCLEOTIDE SEQUENCE [LARGE SCALE GENOMIC DNA]</scope>
    <source>
        <strain>ATCC 700970</strain>
    </source>
</reference>
<name>RS15_UREPA</name>
<sequence>MAVSKQQKHDLTVKFGGSASNTGKTEVQVAILSAEIDSLTTHMIENKKDKASKRGLYKKVAQRKKLLSYLQRVDIERYRALIKELNLRG</sequence>